<protein>
    <recommendedName>
        <fullName evidence="1">Holo-[acyl-carrier-protein] synthase</fullName>
        <shortName evidence="1">Holo-ACP synthase</shortName>
        <ecNumber evidence="1">2.7.8.7</ecNumber>
    </recommendedName>
    <alternativeName>
        <fullName evidence="1">4'-phosphopantetheinyl transferase AcpS</fullName>
    </alternativeName>
</protein>
<dbReference type="EC" id="2.7.8.7" evidence="1"/>
<dbReference type="EMBL" id="CP000153">
    <property type="protein sequence ID" value="ABB44117.1"/>
    <property type="molecule type" value="Genomic_DNA"/>
</dbReference>
<dbReference type="RefSeq" id="WP_011372469.1">
    <property type="nucleotide sequence ID" value="NC_007575.1"/>
</dbReference>
<dbReference type="SMR" id="Q30SB4"/>
<dbReference type="STRING" id="326298.Suden_0839"/>
<dbReference type="KEGG" id="tdn:Suden_0839"/>
<dbReference type="eggNOG" id="COG0736">
    <property type="taxonomic scope" value="Bacteria"/>
</dbReference>
<dbReference type="HOGENOM" id="CLU_089696_0_2_7"/>
<dbReference type="OrthoDB" id="517356at2"/>
<dbReference type="Proteomes" id="UP000002714">
    <property type="component" value="Chromosome"/>
</dbReference>
<dbReference type="GO" id="GO:0005737">
    <property type="term" value="C:cytoplasm"/>
    <property type="evidence" value="ECO:0007669"/>
    <property type="project" value="UniProtKB-SubCell"/>
</dbReference>
<dbReference type="GO" id="GO:0008897">
    <property type="term" value="F:holo-[acyl-carrier-protein] synthase activity"/>
    <property type="evidence" value="ECO:0007669"/>
    <property type="project" value="UniProtKB-UniRule"/>
</dbReference>
<dbReference type="GO" id="GO:0000287">
    <property type="term" value="F:magnesium ion binding"/>
    <property type="evidence" value="ECO:0007669"/>
    <property type="project" value="UniProtKB-UniRule"/>
</dbReference>
<dbReference type="GO" id="GO:0006633">
    <property type="term" value="P:fatty acid biosynthetic process"/>
    <property type="evidence" value="ECO:0007669"/>
    <property type="project" value="UniProtKB-UniRule"/>
</dbReference>
<dbReference type="Gene3D" id="3.90.470.20">
    <property type="entry name" value="4'-phosphopantetheinyl transferase domain"/>
    <property type="match status" value="1"/>
</dbReference>
<dbReference type="HAMAP" id="MF_00101">
    <property type="entry name" value="AcpS"/>
    <property type="match status" value="1"/>
</dbReference>
<dbReference type="InterPro" id="IPR008278">
    <property type="entry name" value="4-PPantetheinyl_Trfase_dom"/>
</dbReference>
<dbReference type="InterPro" id="IPR037143">
    <property type="entry name" value="4-PPantetheinyl_Trfase_dom_sf"/>
</dbReference>
<dbReference type="InterPro" id="IPR002582">
    <property type="entry name" value="ACPS"/>
</dbReference>
<dbReference type="InterPro" id="IPR004568">
    <property type="entry name" value="Ppantetheine-prot_Trfase_dom"/>
</dbReference>
<dbReference type="NCBIfam" id="TIGR00516">
    <property type="entry name" value="acpS"/>
    <property type="match status" value="1"/>
</dbReference>
<dbReference type="NCBIfam" id="TIGR00556">
    <property type="entry name" value="pantethn_trn"/>
    <property type="match status" value="1"/>
</dbReference>
<dbReference type="Pfam" id="PF01648">
    <property type="entry name" value="ACPS"/>
    <property type="match status" value="1"/>
</dbReference>
<dbReference type="SUPFAM" id="SSF56214">
    <property type="entry name" value="4'-phosphopantetheinyl transferase"/>
    <property type="match status" value="1"/>
</dbReference>
<feature type="chain" id="PRO_1000008522" description="Holo-[acyl-carrier-protein] synthase">
    <location>
        <begin position="1"/>
        <end position="121"/>
    </location>
</feature>
<feature type="binding site" evidence="1">
    <location>
        <position position="5"/>
    </location>
    <ligand>
        <name>Mg(2+)</name>
        <dbReference type="ChEBI" id="CHEBI:18420"/>
    </ligand>
</feature>
<feature type="binding site" evidence="1">
    <location>
        <position position="50"/>
    </location>
    <ligand>
        <name>Mg(2+)</name>
        <dbReference type="ChEBI" id="CHEBI:18420"/>
    </ligand>
</feature>
<accession>Q30SB4</accession>
<reference key="1">
    <citation type="journal article" date="2008" name="Appl. Environ. Microbiol.">
        <title>Genome of the epsilonproteobacterial chemolithoautotroph Sulfurimonas denitrificans.</title>
        <authorList>
            <person name="Sievert S.M."/>
            <person name="Scott K.M."/>
            <person name="Klotz M.G."/>
            <person name="Chain P.S.G."/>
            <person name="Hauser L.J."/>
            <person name="Hemp J."/>
            <person name="Huegler M."/>
            <person name="Land M."/>
            <person name="Lapidus A."/>
            <person name="Larimer F.W."/>
            <person name="Lucas S."/>
            <person name="Malfatti S.A."/>
            <person name="Meyer F."/>
            <person name="Paulsen I.T."/>
            <person name="Ren Q."/>
            <person name="Simon J."/>
            <person name="Bailey K."/>
            <person name="Diaz E."/>
            <person name="Fitzpatrick K.A."/>
            <person name="Glover B."/>
            <person name="Gwatney N."/>
            <person name="Korajkic A."/>
            <person name="Long A."/>
            <person name="Mobberley J.M."/>
            <person name="Pantry S.N."/>
            <person name="Pazder G."/>
            <person name="Peterson S."/>
            <person name="Quintanilla J.D."/>
            <person name="Sprinkle R."/>
            <person name="Stephens J."/>
            <person name="Thomas P."/>
            <person name="Vaughn R."/>
            <person name="Weber M.J."/>
            <person name="Wooten L.L."/>
        </authorList>
    </citation>
    <scope>NUCLEOTIDE SEQUENCE [LARGE SCALE GENOMIC DNA]</scope>
    <source>
        <strain>ATCC 33889 / DSM 1251</strain>
    </source>
</reference>
<gene>
    <name evidence="1" type="primary">acpS</name>
    <name type="ordered locus">Suden_0839</name>
</gene>
<name>ACPS_SULDN</name>
<keyword id="KW-0963">Cytoplasm</keyword>
<keyword id="KW-0275">Fatty acid biosynthesis</keyword>
<keyword id="KW-0276">Fatty acid metabolism</keyword>
<keyword id="KW-0444">Lipid biosynthesis</keyword>
<keyword id="KW-0443">Lipid metabolism</keyword>
<keyword id="KW-0460">Magnesium</keyword>
<keyword id="KW-0479">Metal-binding</keyword>
<keyword id="KW-1185">Reference proteome</keyword>
<keyword id="KW-0808">Transferase</keyword>
<proteinExistence type="inferred from homology"/>
<evidence type="ECO:0000255" key="1">
    <source>
        <dbReference type="HAMAP-Rule" id="MF_00101"/>
    </source>
</evidence>
<sequence>MIGIDIIKISRMGALLERFGSKAMGRFLSKDEIELVKNHKTASGFWAAKEACSKALGVGIGAECGFHDITIFKSSNGAPNIRLSQKIVKEFNVKSISLSITHDGEYAIAVVTIESTAANKI</sequence>
<comment type="function">
    <text evidence="1">Transfers the 4'-phosphopantetheine moiety from coenzyme A to a Ser of acyl-carrier-protein.</text>
</comment>
<comment type="catalytic activity">
    <reaction evidence="1">
        <text>apo-[ACP] + CoA = holo-[ACP] + adenosine 3',5'-bisphosphate + H(+)</text>
        <dbReference type="Rhea" id="RHEA:12068"/>
        <dbReference type="Rhea" id="RHEA-COMP:9685"/>
        <dbReference type="Rhea" id="RHEA-COMP:9690"/>
        <dbReference type="ChEBI" id="CHEBI:15378"/>
        <dbReference type="ChEBI" id="CHEBI:29999"/>
        <dbReference type="ChEBI" id="CHEBI:57287"/>
        <dbReference type="ChEBI" id="CHEBI:58343"/>
        <dbReference type="ChEBI" id="CHEBI:64479"/>
        <dbReference type="EC" id="2.7.8.7"/>
    </reaction>
</comment>
<comment type="cofactor">
    <cofactor evidence="1">
        <name>Mg(2+)</name>
        <dbReference type="ChEBI" id="CHEBI:18420"/>
    </cofactor>
</comment>
<comment type="subcellular location">
    <subcellularLocation>
        <location evidence="1">Cytoplasm</location>
    </subcellularLocation>
</comment>
<comment type="similarity">
    <text evidence="1">Belongs to the P-Pant transferase superfamily. AcpS family.</text>
</comment>
<organism>
    <name type="scientific">Sulfurimonas denitrificans (strain ATCC 33889 / DSM 1251)</name>
    <name type="common">Thiomicrospira denitrificans (strain ATCC 33889 / DSM 1251)</name>
    <dbReference type="NCBI Taxonomy" id="326298"/>
    <lineage>
        <taxon>Bacteria</taxon>
        <taxon>Pseudomonadati</taxon>
        <taxon>Campylobacterota</taxon>
        <taxon>Epsilonproteobacteria</taxon>
        <taxon>Campylobacterales</taxon>
        <taxon>Sulfurimonadaceae</taxon>
        <taxon>Sulfurimonas</taxon>
    </lineage>
</organism>